<keyword id="KW-0030">Aminoacyl-tRNA synthetase</keyword>
<keyword id="KW-0067">ATP-binding</keyword>
<keyword id="KW-0963">Cytoplasm</keyword>
<keyword id="KW-0436">Ligase</keyword>
<keyword id="KW-0547">Nucleotide-binding</keyword>
<keyword id="KW-0648">Protein biosynthesis</keyword>
<organism>
    <name type="scientific">Methanococcus vannielii (strain ATCC 35089 / DSM 1224 / JCM 13029 / OCM 148 / SB)</name>
    <dbReference type="NCBI Taxonomy" id="406327"/>
    <lineage>
        <taxon>Archaea</taxon>
        <taxon>Methanobacteriati</taxon>
        <taxon>Methanobacteriota</taxon>
        <taxon>Methanomada group</taxon>
        <taxon>Methanococci</taxon>
        <taxon>Methanococcales</taxon>
        <taxon>Methanococcaceae</taxon>
        <taxon>Methanococcus</taxon>
    </lineage>
</organism>
<feature type="chain" id="PRO_0000334846" description="Leucine--tRNA ligase">
    <location>
        <begin position="1"/>
        <end position="952"/>
    </location>
</feature>
<feature type="short sequence motif" description="'HIGH' region">
    <location>
        <begin position="48"/>
        <end position="58"/>
    </location>
</feature>
<feature type="short sequence motif" description="'KMSKS' region">
    <location>
        <begin position="644"/>
        <end position="648"/>
    </location>
</feature>
<feature type="binding site" evidence="1">
    <location>
        <position position="647"/>
    </location>
    <ligand>
        <name>ATP</name>
        <dbReference type="ChEBI" id="CHEBI:30616"/>
    </ligand>
</feature>
<evidence type="ECO:0000255" key="1">
    <source>
        <dbReference type="HAMAP-Rule" id="MF_00049"/>
    </source>
</evidence>
<protein>
    <recommendedName>
        <fullName evidence="1">Leucine--tRNA ligase</fullName>
        <ecNumber evidence="1">6.1.1.4</ecNumber>
    </recommendedName>
    <alternativeName>
        <fullName evidence="1">Leucyl-tRNA synthetase</fullName>
        <shortName evidence="1">LeuRS</shortName>
    </alternativeName>
</protein>
<dbReference type="EC" id="6.1.1.4" evidence="1"/>
<dbReference type="EMBL" id="CP000742">
    <property type="protein sequence ID" value="ABR55467.1"/>
    <property type="molecule type" value="Genomic_DNA"/>
</dbReference>
<dbReference type="RefSeq" id="WP_012066381.1">
    <property type="nucleotide sequence ID" value="NC_009634.1"/>
</dbReference>
<dbReference type="SMR" id="A6USJ5"/>
<dbReference type="STRING" id="406327.Mevan_1575"/>
<dbReference type="GeneID" id="5325458"/>
<dbReference type="KEGG" id="mvn:Mevan_1575"/>
<dbReference type="eggNOG" id="arCOG00809">
    <property type="taxonomic scope" value="Archaea"/>
</dbReference>
<dbReference type="HOGENOM" id="CLU_004174_0_0_2"/>
<dbReference type="OrthoDB" id="23906at2157"/>
<dbReference type="Proteomes" id="UP000001107">
    <property type="component" value="Chromosome"/>
</dbReference>
<dbReference type="GO" id="GO:0005737">
    <property type="term" value="C:cytoplasm"/>
    <property type="evidence" value="ECO:0007669"/>
    <property type="project" value="UniProtKB-SubCell"/>
</dbReference>
<dbReference type="GO" id="GO:0002161">
    <property type="term" value="F:aminoacyl-tRNA deacylase activity"/>
    <property type="evidence" value="ECO:0007669"/>
    <property type="project" value="InterPro"/>
</dbReference>
<dbReference type="GO" id="GO:0005524">
    <property type="term" value="F:ATP binding"/>
    <property type="evidence" value="ECO:0007669"/>
    <property type="project" value="UniProtKB-UniRule"/>
</dbReference>
<dbReference type="GO" id="GO:0004823">
    <property type="term" value="F:leucine-tRNA ligase activity"/>
    <property type="evidence" value="ECO:0007669"/>
    <property type="project" value="UniProtKB-UniRule"/>
</dbReference>
<dbReference type="GO" id="GO:0006429">
    <property type="term" value="P:leucyl-tRNA aminoacylation"/>
    <property type="evidence" value="ECO:0007669"/>
    <property type="project" value="UniProtKB-UniRule"/>
</dbReference>
<dbReference type="CDD" id="cd07959">
    <property type="entry name" value="Anticodon_Ia_Leu_AEc"/>
    <property type="match status" value="1"/>
</dbReference>
<dbReference type="Gene3D" id="3.30.2320.20">
    <property type="entry name" value="Class I aminoacyl-tRNA synthetases (RS)"/>
    <property type="match status" value="1"/>
</dbReference>
<dbReference type="Gene3D" id="3.40.50.620">
    <property type="entry name" value="HUPs"/>
    <property type="match status" value="1"/>
</dbReference>
<dbReference type="Gene3D" id="1.10.730.10">
    <property type="entry name" value="Isoleucyl-tRNA Synthetase, Domain 1"/>
    <property type="match status" value="1"/>
</dbReference>
<dbReference type="Gene3D" id="1.10.10.720">
    <property type="entry name" value="leucyl-tRNA synthetase"/>
    <property type="match status" value="1"/>
</dbReference>
<dbReference type="Gene3D" id="3.90.740.10">
    <property type="entry name" value="Valyl/Leucyl/Isoleucyl-tRNA synthetase, editing domain"/>
    <property type="match status" value="1"/>
</dbReference>
<dbReference type="HAMAP" id="MF_00049_A">
    <property type="entry name" value="Leu_tRNA_synth_A"/>
    <property type="match status" value="1"/>
</dbReference>
<dbReference type="InterPro" id="IPR001412">
    <property type="entry name" value="aa-tRNA-synth_I_CS"/>
</dbReference>
<dbReference type="InterPro" id="IPR002300">
    <property type="entry name" value="aa-tRNA-synth_Ia"/>
</dbReference>
<dbReference type="InterPro" id="IPR020791">
    <property type="entry name" value="Leu-tRNA-lgase_arc"/>
</dbReference>
<dbReference type="InterPro" id="IPR004493">
    <property type="entry name" value="Leu-tRNA-synth_Ia_arc/euk"/>
</dbReference>
<dbReference type="InterPro" id="IPR013155">
    <property type="entry name" value="M/V/L/I-tRNA-synth_anticd-bd"/>
</dbReference>
<dbReference type="InterPro" id="IPR014729">
    <property type="entry name" value="Rossmann-like_a/b/a_fold"/>
</dbReference>
<dbReference type="InterPro" id="IPR009080">
    <property type="entry name" value="tRNAsynth_Ia_anticodon-bd"/>
</dbReference>
<dbReference type="InterPro" id="IPR009008">
    <property type="entry name" value="Val/Leu/Ile-tRNA-synth_edit"/>
</dbReference>
<dbReference type="NCBIfam" id="TIGR00395">
    <property type="entry name" value="leuS_arch"/>
    <property type="match status" value="1"/>
</dbReference>
<dbReference type="NCBIfam" id="NF008957">
    <property type="entry name" value="PRK12300.1"/>
    <property type="match status" value="1"/>
</dbReference>
<dbReference type="PANTHER" id="PTHR45794:SF1">
    <property type="entry name" value="LEUCINE--TRNA LIGASE, CYTOPLASMIC"/>
    <property type="match status" value="1"/>
</dbReference>
<dbReference type="PANTHER" id="PTHR45794">
    <property type="entry name" value="LEUCYL-TRNA SYNTHETASE"/>
    <property type="match status" value="1"/>
</dbReference>
<dbReference type="Pfam" id="PF08264">
    <property type="entry name" value="Anticodon_1"/>
    <property type="match status" value="1"/>
</dbReference>
<dbReference type="Pfam" id="PF00133">
    <property type="entry name" value="tRNA-synt_1"/>
    <property type="match status" value="1"/>
</dbReference>
<dbReference type="SUPFAM" id="SSF47323">
    <property type="entry name" value="Anticodon-binding domain of a subclass of class I aminoacyl-tRNA synthetases"/>
    <property type="match status" value="1"/>
</dbReference>
<dbReference type="SUPFAM" id="SSF52374">
    <property type="entry name" value="Nucleotidylyl transferase"/>
    <property type="match status" value="1"/>
</dbReference>
<dbReference type="SUPFAM" id="SSF50677">
    <property type="entry name" value="ValRS/IleRS/LeuRS editing domain"/>
    <property type="match status" value="1"/>
</dbReference>
<dbReference type="PROSITE" id="PS00178">
    <property type="entry name" value="AA_TRNA_LIGASE_I"/>
    <property type="match status" value="1"/>
</dbReference>
<proteinExistence type="inferred from homology"/>
<comment type="catalytic activity">
    <reaction evidence="1">
        <text>tRNA(Leu) + L-leucine + ATP = L-leucyl-tRNA(Leu) + AMP + diphosphate</text>
        <dbReference type="Rhea" id="RHEA:11688"/>
        <dbReference type="Rhea" id="RHEA-COMP:9613"/>
        <dbReference type="Rhea" id="RHEA-COMP:9622"/>
        <dbReference type="ChEBI" id="CHEBI:30616"/>
        <dbReference type="ChEBI" id="CHEBI:33019"/>
        <dbReference type="ChEBI" id="CHEBI:57427"/>
        <dbReference type="ChEBI" id="CHEBI:78442"/>
        <dbReference type="ChEBI" id="CHEBI:78494"/>
        <dbReference type="ChEBI" id="CHEBI:456215"/>
        <dbReference type="EC" id="6.1.1.4"/>
    </reaction>
</comment>
<comment type="subcellular location">
    <subcellularLocation>
        <location evidence="1">Cytoplasm</location>
    </subcellularLocation>
</comment>
<comment type="similarity">
    <text evidence="1">Belongs to the class-I aminoacyl-tRNA synthetase family.</text>
</comment>
<sequence length="952" mass="111051">MVENMETSFKSIDLIQIMDKWQRKWDESKIFETKHDNREKFFISAAFPYLNGVLHAGHLRTFTIPETIARYQRMKNKNVLWTFGFHVTGTPILGLANQIKEKKEDIIWAYTNLHNIPMDELLKLDTPEAIVECFSKKATDAFKKMGFSLDWRRNFKTDDKVFSKFIEWQFYKLKDLGLIKKGSHPVRYCPKCENPVEDHDLLHGEESTTVEYNLIKFTSTFDEKDVIIPMATLRPETVFGVTNAWVNPDEIYVLAEVYDEIQKLDSEDVDLKYNGLWIVGKECADKLKEQDKNIKILKEFKGSELIGLKIKNPVTNLKVPIFPAEFVEMNIGTGCVMSVPAHAPYDYVALRDLEKVEEVGLISLIEIEGYGKYPAKEIVEKMNIKNQKDEALLEEATSKIYKDEFHKGKLNENCPEYKGTSVKDIKEKLIKDYMNFGISEIMYEFSEPKVVCRCGEKCIIKTVKGQWFITYSDENWKRLAHECIDSMEFAPENLRHEFHNKIDWMKDKACARRKGLGTKLPFDTNWMIESLSDSTIYMAYYTIARFINAGINENQLTSELFEYVFSGNGNLAEISNVSEVSIEIIEEMRKEFLYFYPLDWRCSAKDLIPNHLSFMIFNHVALFKKEHWPRGIEINGYVTIEGKKLSKSKGPVLPVLEVSETFGADVARFYITTCAELPQDADVKFKEMEKARDNLIKLYELAVLVTKEGIIEKELSIIDKWLLHKTHSSINFAEKAYEEFHLRKIGLMFYELINDLRWYKRRGGDNNGVLKEVVEIWTKLLSPVTPHLCEEIWELLGHNGFISKEIFPNVKIEYINEELELGEEFIRFTMEDIRNIKNVAKINPEKMYLYTADDWKYELLEFMNKNSEKNVKELIPIVMKEERFKRHGKDVMKLINDLMKVGVKKAIAEVEILENAKTFIEKEFECNVIIGGEDFNGKKKFAIPYKPAIYME</sequence>
<reference key="1">
    <citation type="submission" date="2007-06" db="EMBL/GenBank/DDBJ databases">
        <title>Complete sequence of Methanococcus vannielii SB.</title>
        <authorList>
            <consortium name="US DOE Joint Genome Institute"/>
            <person name="Copeland A."/>
            <person name="Lucas S."/>
            <person name="Lapidus A."/>
            <person name="Barry K."/>
            <person name="Glavina del Rio T."/>
            <person name="Dalin E."/>
            <person name="Tice H."/>
            <person name="Pitluck S."/>
            <person name="Chain P."/>
            <person name="Malfatti S."/>
            <person name="Shin M."/>
            <person name="Vergez L."/>
            <person name="Schmutz J."/>
            <person name="Larimer F."/>
            <person name="Land M."/>
            <person name="Hauser L."/>
            <person name="Kyrpides N."/>
            <person name="Anderson I."/>
            <person name="Sieprawska-Lupa M."/>
            <person name="Whitman W.B."/>
            <person name="Richardson P."/>
        </authorList>
    </citation>
    <scope>NUCLEOTIDE SEQUENCE [LARGE SCALE GENOMIC DNA]</scope>
    <source>
        <strain>ATCC 35089 / DSM 1224 / JCM 13029 / OCM 148 / SB</strain>
    </source>
</reference>
<gene>
    <name evidence="1" type="primary">leuS</name>
    <name type="ordered locus">Mevan_1575</name>
</gene>
<accession>A6USJ5</accession>
<name>SYL_METVS</name>